<sequence length="833" mass="93127">MSGVVLLVLAIILITIFSLIYYTIFFEFDETTFSKRLRVLTEYAKRTNADKPTPDVLGHVSDVYDHTYIVSWFRTNDLSTYHETVHDDTVEVFDFLEQQFSGAQATVTQRVAPVAAELDAFVVTNDAGDVKLRCPQNFSFDYGQLKCVPEDPCSGRPPGRYPMNELLLDTLVHNQHSDKNYSAGAHLYHPTLYLRCLANGSHAVRECPDNYTFDAEAGECRVNELCEGRPDGFVLPYFPEALLVNEFVECRNGEHVVAQCADGQVFDRALMTCVHAHPCAFNGAGHTYITSDIGDTQFFKCLNNHEAQLVTCINRAHGADGQYACSGDARCADLPKGTGQLVHIHTDDTFEYASGQMICDNYEVVSEINCDTGDVLGDKLFINKFKLNVQFPLEVLEFGACAPATLNNVSVLNDTFPIENAPNDYGVNMQTSVVGRTSMVAKLMAGDDPDTAFGENVLLARDVNTVGLNPFTAEPIDCFGAQLYDVMDAHRANVCTESGNDLLKTVEFGDGAFLSVFRDDLTGSDADYKQFCAISYESPLKIVKSDHFQRRILTNILQSDICADLYTTIYQKYTTLARKYTTSPVQYNYTFVKRPENMVVYAKNTRFKNATISEPAFDLFAAQTTDKENGFARSLFDPFADGVWRSEPGGDGDHWAPEVPPTQPEPELEPESETELDSDLELEPEFSPLILNKKDLFYSCFYELPSFKLSSCHAENDVIVDALQQLRASVKVDTECELAKDLHFVLNAYAYTGNNIGCRSVFDGDDVAVVKEPVPSYVFTNLQTQSNDGVRYNKHVHVKDGRYMACPEHLYDDEAFACNAEPDKLYYLENMQQ</sequence>
<evidence type="ECO:0000250" key="1"/>
<evidence type="ECO:0000255" key="2"/>
<evidence type="ECO:0000255" key="3">
    <source>
        <dbReference type="PROSITE-ProRule" id="PRU00144"/>
    </source>
</evidence>
<evidence type="ECO:0000255" key="4">
    <source>
        <dbReference type="PROSITE-ProRule" id="PRU01148"/>
    </source>
</evidence>
<evidence type="ECO:0000256" key="5">
    <source>
        <dbReference type="SAM" id="MobiDB-lite"/>
    </source>
</evidence>
<accession>Q7TLR9</accession>
<dbReference type="EMBL" id="AF512031">
    <property type="protein sequence ID" value="AAP29860.1"/>
    <property type="molecule type" value="Genomic_DNA"/>
</dbReference>
<dbReference type="RefSeq" id="NP_848389.1">
    <property type="nucleotide sequence ID" value="NC_004778.3"/>
</dbReference>
<dbReference type="SMR" id="Q7TLR9"/>
<dbReference type="CAZy" id="CBM14">
    <property type="family name" value="Carbohydrate-Binding Module Family 14"/>
</dbReference>
<dbReference type="KEGG" id="vg:1482718"/>
<dbReference type="OrthoDB" id="542at10239"/>
<dbReference type="Proteomes" id="UP000204418">
    <property type="component" value="Genome"/>
</dbReference>
<dbReference type="GO" id="GO:0005576">
    <property type="term" value="C:extracellular region"/>
    <property type="evidence" value="ECO:0007669"/>
    <property type="project" value="InterPro"/>
</dbReference>
<dbReference type="GO" id="GO:0044423">
    <property type="term" value="C:virion component"/>
    <property type="evidence" value="ECO:0007669"/>
    <property type="project" value="UniProtKB-KW"/>
</dbReference>
<dbReference type="GO" id="GO:0008061">
    <property type="term" value="F:chitin binding"/>
    <property type="evidence" value="ECO:0007669"/>
    <property type="project" value="UniProtKB-KW"/>
</dbReference>
<dbReference type="GO" id="GO:0008270">
    <property type="term" value="F:zinc ion binding"/>
    <property type="evidence" value="ECO:0007669"/>
    <property type="project" value="UniProtKB-KW"/>
</dbReference>
<dbReference type="Gene3D" id="2.170.140.10">
    <property type="entry name" value="Chitin binding domain"/>
    <property type="match status" value="1"/>
</dbReference>
<dbReference type="InterPro" id="IPR013682">
    <property type="entry name" value="BaculoV_Vp91_N"/>
</dbReference>
<dbReference type="InterPro" id="IPR002557">
    <property type="entry name" value="Chitin-bd_dom"/>
</dbReference>
<dbReference type="InterPro" id="IPR036508">
    <property type="entry name" value="Chitin-bd_dom_sf"/>
</dbReference>
<dbReference type="Pfam" id="PF08475">
    <property type="entry name" value="Baculo_VP91_N"/>
    <property type="match status" value="1"/>
</dbReference>
<dbReference type="Pfam" id="PF01607">
    <property type="entry name" value="CBM_14"/>
    <property type="match status" value="1"/>
</dbReference>
<dbReference type="SMART" id="SM00494">
    <property type="entry name" value="ChtBD2"/>
    <property type="match status" value="1"/>
</dbReference>
<dbReference type="SUPFAM" id="SSF57625">
    <property type="entry name" value="Invertebrate chitin-binding proteins"/>
    <property type="match status" value="2"/>
</dbReference>
<dbReference type="PROSITE" id="PS50940">
    <property type="entry name" value="CHIT_BIND_II"/>
    <property type="match status" value="1"/>
</dbReference>
<dbReference type="PROSITE" id="PS51807">
    <property type="entry name" value="ZF_C2HC_BV"/>
    <property type="match status" value="1"/>
</dbReference>
<protein>
    <recommendedName>
        <fullName>Capsid-associated protein Vp91</fullName>
    </recommendedName>
</protein>
<organism>
    <name type="scientific">Choristoneura fumiferana nuclear polyhedrosis virus</name>
    <name type="common">CfMNPV</name>
    <dbReference type="NCBI Taxonomy" id="208973"/>
    <lineage>
        <taxon>Viruses</taxon>
        <taxon>Viruses incertae sedis</taxon>
        <taxon>Naldaviricetes</taxon>
        <taxon>Lefavirales</taxon>
        <taxon>Baculoviridae</taxon>
        <taxon>Alphabaculovirus</taxon>
        <taxon>Alphabaculovirus chofumiferanae</taxon>
    </lineage>
</organism>
<feature type="signal peptide" evidence="2">
    <location>
        <begin position="1"/>
        <end position="18"/>
    </location>
</feature>
<feature type="chain" id="PRO_0000045466" description="Capsid-associated protein Vp91">
    <location>
        <begin position="19"/>
        <end position="833"/>
    </location>
</feature>
<feature type="domain" description="Chitin-binding type-2" evidence="3">
    <location>
        <begin position="223"/>
        <end position="281"/>
    </location>
</feature>
<feature type="zinc finger region" description="C2HC BV-type" evidence="4">
    <location>
        <begin position="147"/>
        <end position="196"/>
    </location>
</feature>
<feature type="region of interest" description="Disordered" evidence="5">
    <location>
        <begin position="647"/>
        <end position="673"/>
    </location>
</feature>
<feature type="glycosylation site" description="N-linked (GlcNAc...) asparagine; by host" evidence="2">
    <location>
        <position position="137"/>
    </location>
</feature>
<feature type="glycosylation site" description="N-linked (GlcNAc...) asparagine; by host" evidence="2">
    <location>
        <position position="180"/>
    </location>
</feature>
<feature type="glycosylation site" description="N-linked (GlcNAc...) asparagine; by host" evidence="2">
    <location>
        <position position="199"/>
    </location>
</feature>
<feature type="glycosylation site" description="N-linked (GlcNAc...) asparagine; by host" evidence="2">
    <location>
        <position position="210"/>
    </location>
</feature>
<feature type="glycosylation site" description="N-linked (GlcNAc...) asparagine; by host" evidence="2">
    <location>
        <position position="408"/>
    </location>
</feature>
<feature type="glycosylation site" description="N-linked (GlcNAc...) asparagine; by host" evidence="2">
    <location>
        <position position="413"/>
    </location>
</feature>
<feature type="glycosylation site" description="N-linked (GlcNAc...) asparagine; by host" evidence="2">
    <location>
        <position position="588"/>
    </location>
</feature>
<feature type="glycosylation site" description="N-linked (GlcNAc...) asparagine; by host" evidence="2">
    <location>
        <position position="609"/>
    </location>
</feature>
<feature type="disulfide bond" evidence="3">
    <location>
        <begin position="207"/>
        <end position="220"/>
    </location>
</feature>
<feature type="disulfide bond" evidence="3">
    <location>
        <begin position="260"/>
        <end position="273"/>
    </location>
</feature>
<keyword id="KW-0147">Chitin-binding</keyword>
<keyword id="KW-1015">Disulfide bond</keyword>
<keyword id="KW-0325">Glycoprotein</keyword>
<keyword id="KW-0479">Metal-binding</keyword>
<keyword id="KW-1185">Reference proteome</keyword>
<keyword id="KW-0677">Repeat</keyword>
<keyword id="KW-0732">Signal</keyword>
<keyword id="KW-0946">Virion</keyword>
<keyword id="KW-0862">Zinc</keyword>
<keyword id="KW-0863">Zinc-finger</keyword>
<organismHost>
    <name type="scientific">Choristoneura fumiferana</name>
    <name type="common">Spruce budworm moth</name>
    <name type="synonym">Archips fumiferana</name>
    <dbReference type="NCBI Taxonomy" id="7141"/>
</organismHost>
<proteinExistence type="inferred from homology"/>
<comment type="function">
    <text>Probable capsid-associated protein.</text>
</comment>
<comment type="subcellular location">
    <subcellularLocation>
        <location evidence="1">Virion</location>
    </subcellularLocation>
    <text evidence="1">In virions, associates with the capsid and maybe also with the envelope surrounding the capsid.</text>
</comment>
<name>VP91_NPVCF</name>
<reference key="1">
    <citation type="journal article" date="2005" name="J. Gen. Virol.">
        <title>Analysis of the Choristoneura fumiferana nucleopolyhedrovirus genome.</title>
        <authorList>
            <person name="de Jong J.G."/>
            <person name="Lauzon H.A.M."/>
            <person name="Dominy C."/>
            <person name="Poloumienko A."/>
            <person name="Carstens E.B."/>
            <person name="Arif B.M."/>
            <person name="Krell P.J."/>
        </authorList>
    </citation>
    <scope>NUCLEOTIDE SEQUENCE [LARGE SCALE GENOMIC DNA]</scope>
</reference>
<gene>
    <name type="ORF">ORF78</name>
</gene>